<protein>
    <recommendedName>
        <fullName evidence="1">Acetyl-coenzyme A carboxylase carboxyl transferase subunit alpha</fullName>
        <shortName evidence="1">ACCase subunit alpha</shortName>
        <shortName evidence="1">Acetyl-CoA carboxylase carboxyltransferase subunit alpha</shortName>
        <ecNumber evidence="1">2.1.3.15</ecNumber>
    </recommendedName>
</protein>
<evidence type="ECO:0000255" key="1">
    <source>
        <dbReference type="HAMAP-Rule" id="MF_00823"/>
    </source>
</evidence>
<evidence type="ECO:0000255" key="2">
    <source>
        <dbReference type="PROSITE-ProRule" id="PRU01137"/>
    </source>
</evidence>
<organism>
    <name type="scientific">Streptococcus pneumoniae (strain Hungary19A-6)</name>
    <dbReference type="NCBI Taxonomy" id="487214"/>
    <lineage>
        <taxon>Bacteria</taxon>
        <taxon>Bacillati</taxon>
        <taxon>Bacillota</taxon>
        <taxon>Bacilli</taxon>
        <taxon>Lactobacillales</taxon>
        <taxon>Streptococcaceae</taxon>
        <taxon>Streptococcus</taxon>
    </lineage>
</organism>
<accession>B1I9M1</accession>
<dbReference type="EC" id="2.1.3.15" evidence="1"/>
<dbReference type="EMBL" id="CP000936">
    <property type="protein sequence ID" value="ACA37463.1"/>
    <property type="molecule type" value="Genomic_DNA"/>
</dbReference>
<dbReference type="RefSeq" id="WP_001017399.1">
    <property type="nucleotide sequence ID" value="NC_010380.1"/>
</dbReference>
<dbReference type="SMR" id="B1I9M1"/>
<dbReference type="KEGG" id="spv:SPH_0536"/>
<dbReference type="HOGENOM" id="CLU_015486_0_2_9"/>
<dbReference type="UniPathway" id="UPA00655">
    <property type="reaction ID" value="UER00711"/>
</dbReference>
<dbReference type="Proteomes" id="UP000002163">
    <property type="component" value="Chromosome"/>
</dbReference>
<dbReference type="GO" id="GO:0009317">
    <property type="term" value="C:acetyl-CoA carboxylase complex"/>
    <property type="evidence" value="ECO:0007669"/>
    <property type="project" value="InterPro"/>
</dbReference>
<dbReference type="GO" id="GO:0003989">
    <property type="term" value="F:acetyl-CoA carboxylase activity"/>
    <property type="evidence" value="ECO:0007669"/>
    <property type="project" value="InterPro"/>
</dbReference>
<dbReference type="GO" id="GO:0005524">
    <property type="term" value="F:ATP binding"/>
    <property type="evidence" value="ECO:0007669"/>
    <property type="project" value="UniProtKB-KW"/>
</dbReference>
<dbReference type="GO" id="GO:0016743">
    <property type="term" value="F:carboxyl- or carbamoyltransferase activity"/>
    <property type="evidence" value="ECO:0007669"/>
    <property type="project" value="UniProtKB-UniRule"/>
</dbReference>
<dbReference type="GO" id="GO:0006633">
    <property type="term" value="P:fatty acid biosynthetic process"/>
    <property type="evidence" value="ECO:0007669"/>
    <property type="project" value="UniProtKB-KW"/>
</dbReference>
<dbReference type="GO" id="GO:2001295">
    <property type="term" value="P:malonyl-CoA biosynthetic process"/>
    <property type="evidence" value="ECO:0007669"/>
    <property type="project" value="UniProtKB-UniRule"/>
</dbReference>
<dbReference type="Gene3D" id="3.90.226.10">
    <property type="entry name" value="2-enoyl-CoA Hydratase, Chain A, domain 1"/>
    <property type="match status" value="1"/>
</dbReference>
<dbReference type="HAMAP" id="MF_00823">
    <property type="entry name" value="AcetylCoA_CT_alpha"/>
    <property type="match status" value="1"/>
</dbReference>
<dbReference type="InterPro" id="IPR001095">
    <property type="entry name" value="Acetyl_CoA_COase_a_su"/>
</dbReference>
<dbReference type="InterPro" id="IPR029045">
    <property type="entry name" value="ClpP/crotonase-like_dom_sf"/>
</dbReference>
<dbReference type="InterPro" id="IPR011763">
    <property type="entry name" value="COA_CT_C"/>
</dbReference>
<dbReference type="NCBIfam" id="TIGR00513">
    <property type="entry name" value="accA"/>
    <property type="match status" value="1"/>
</dbReference>
<dbReference type="NCBIfam" id="NF041504">
    <property type="entry name" value="AccA_sub"/>
    <property type="match status" value="1"/>
</dbReference>
<dbReference type="NCBIfam" id="NF004344">
    <property type="entry name" value="PRK05724.1"/>
    <property type="match status" value="1"/>
</dbReference>
<dbReference type="NCBIfam" id="NF008971">
    <property type="entry name" value="PRK12319.1"/>
    <property type="match status" value="1"/>
</dbReference>
<dbReference type="PANTHER" id="PTHR42853">
    <property type="entry name" value="ACETYL-COENZYME A CARBOXYLASE CARBOXYL TRANSFERASE SUBUNIT ALPHA"/>
    <property type="match status" value="1"/>
</dbReference>
<dbReference type="PANTHER" id="PTHR42853:SF3">
    <property type="entry name" value="ACETYL-COENZYME A CARBOXYLASE CARBOXYL TRANSFERASE SUBUNIT ALPHA, CHLOROPLASTIC"/>
    <property type="match status" value="1"/>
</dbReference>
<dbReference type="Pfam" id="PF03255">
    <property type="entry name" value="ACCA"/>
    <property type="match status" value="1"/>
</dbReference>
<dbReference type="PRINTS" id="PR01069">
    <property type="entry name" value="ACCCTRFRASEA"/>
</dbReference>
<dbReference type="SUPFAM" id="SSF52096">
    <property type="entry name" value="ClpP/crotonase"/>
    <property type="match status" value="1"/>
</dbReference>
<dbReference type="PROSITE" id="PS50989">
    <property type="entry name" value="COA_CT_CTER"/>
    <property type="match status" value="1"/>
</dbReference>
<comment type="function">
    <text evidence="1">Component of the acetyl coenzyme A carboxylase (ACC) complex. First, biotin carboxylase catalyzes the carboxylation of biotin on its carrier protein (BCCP) and then the CO(2) group is transferred by the carboxyltransferase to acetyl-CoA to form malonyl-CoA.</text>
</comment>
<comment type="catalytic activity">
    <reaction evidence="1">
        <text>N(6)-carboxybiotinyl-L-lysyl-[protein] + acetyl-CoA = N(6)-biotinyl-L-lysyl-[protein] + malonyl-CoA</text>
        <dbReference type="Rhea" id="RHEA:54728"/>
        <dbReference type="Rhea" id="RHEA-COMP:10505"/>
        <dbReference type="Rhea" id="RHEA-COMP:10506"/>
        <dbReference type="ChEBI" id="CHEBI:57288"/>
        <dbReference type="ChEBI" id="CHEBI:57384"/>
        <dbReference type="ChEBI" id="CHEBI:83144"/>
        <dbReference type="ChEBI" id="CHEBI:83145"/>
        <dbReference type="EC" id="2.1.3.15"/>
    </reaction>
</comment>
<comment type="pathway">
    <text evidence="1">Lipid metabolism; malonyl-CoA biosynthesis; malonyl-CoA from acetyl-CoA: step 1/1.</text>
</comment>
<comment type="subunit">
    <text evidence="1">Acetyl-CoA carboxylase is a heterohexamer composed of biotin carboxyl carrier protein (AccB), biotin carboxylase (AccC) and two subunits each of ACCase subunit alpha (AccA) and ACCase subunit beta (AccD).</text>
</comment>
<comment type="subcellular location">
    <subcellularLocation>
        <location evidence="1">Cytoplasm</location>
    </subcellularLocation>
</comment>
<comment type="similarity">
    <text evidence="1">Belongs to the AccA family.</text>
</comment>
<feature type="chain" id="PRO_1000134528" description="Acetyl-coenzyme A carboxylase carboxyl transferase subunit alpha">
    <location>
        <begin position="1"/>
        <end position="255"/>
    </location>
</feature>
<feature type="domain" description="CoA carboxyltransferase C-terminal" evidence="2">
    <location>
        <begin position="1"/>
        <end position="235"/>
    </location>
</feature>
<proteinExistence type="inferred from homology"/>
<name>ACCA_STRPI</name>
<sequence>MNIAKIVREAREQSRLTTLDFATGIFDEFIQLHGDRSFRDDGAVVGGIGWLGDQAVTVVGIQKGKSLQDNLKRNFGQPHPEGYRKALRLMKQAEKFGRPVVTFINTAGAYPGVGAEERGQGEAIARNLMEMSDLKVPIIAIIIGEGGSGGALALAVADRVWMLENSIYAILSPEGFASILWKDGTRAMEAAELMKITSHELLEMDVVDKVISEVGLSSKELIKSVKKELQTELARLSQKPLEELLEERYQRFRKY</sequence>
<keyword id="KW-0067">ATP-binding</keyword>
<keyword id="KW-0963">Cytoplasm</keyword>
<keyword id="KW-0275">Fatty acid biosynthesis</keyword>
<keyword id="KW-0276">Fatty acid metabolism</keyword>
<keyword id="KW-0444">Lipid biosynthesis</keyword>
<keyword id="KW-0443">Lipid metabolism</keyword>
<keyword id="KW-0547">Nucleotide-binding</keyword>
<keyword id="KW-0808">Transferase</keyword>
<reference key="1">
    <citation type="journal article" date="2010" name="Genome Biol.">
        <title>Structure and dynamics of the pan-genome of Streptococcus pneumoniae and closely related species.</title>
        <authorList>
            <person name="Donati C."/>
            <person name="Hiller N.L."/>
            <person name="Tettelin H."/>
            <person name="Muzzi A."/>
            <person name="Croucher N.J."/>
            <person name="Angiuoli S.V."/>
            <person name="Oggioni M."/>
            <person name="Dunning Hotopp J.C."/>
            <person name="Hu F.Z."/>
            <person name="Riley D.R."/>
            <person name="Covacci A."/>
            <person name="Mitchell T.J."/>
            <person name="Bentley S.D."/>
            <person name="Kilian M."/>
            <person name="Ehrlich G.D."/>
            <person name="Rappuoli R."/>
            <person name="Moxon E.R."/>
            <person name="Masignani V."/>
        </authorList>
    </citation>
    <scope>NUCLEOTIDE SEQUENCE [LARGE SCALE GENOMIC DNA]</scope>
    <source>
        <strain>Hungary19A-6</strain>
    </source>
</reference>
<gene>
    <name evidence="1" type="primary">accA</name>
    <name type="ordered locus">SPH_0536</name>
</gene>